<sequence>MTKDRLAALQAAQSDDEDMPEDVAVPVEGSFMEDFFKEVEEIRMMIDKIQANVEEVKKKHSAILSAPQSDEKTKQELEDLMADIKKTANRVRGKLKGIEQNIEQEEQQSKSNADLRIRKTQHSALSRKFVEVMTEYNRTQTDYRERCKGRIQRQLEITGRATTNEELEEMLEQGNSAVFTQGIIMETQQAKQTLADIEARHADIIKLENSIRELHDMFMDMAMLVESQGEMIDRIEYHVEHAMDYVQTATQDTKKALKYQSKARRKKIWIAICVLIAIIILVVFLAIYLT</sequence>
<organism>
    <name type="scientific">Anopheles gambiae</name>
    <name type="common">African malaria mosquito</name>
    <dbReference type="NCBI Taxonomy" id="7165"/>
    <lineage>
        <taxon>Eukaryota</taxon>
        <taxon>Metazoa</taxon>
        <taxon>Ecdysozoa</taxon>
        <taxon>Arthropoda</taxon>
        <taxon>Hexapoda</taxon>
        <taxon>Insecta</taxon>
        <taxon>Pterygota</taxon>
        <taxon>Neoptera</taxon>
        <taxon>Endopterygota</taxon>
        <taxon>Diptera</taxon>
        <taxon>Nematocera</taxon>
        <taxon>Culicoidea</taxon>
        <taxon>Culicidae</taxon>
        <taxon>Anophelinae</taxon>
        <taxon>Anopheles</taxon>
    </lineage>
</organism>
<protein>
    <recommendedName>
        <fullName evidence="6">Syntaxin-1A</fullName>
    </recommendedName>
</protein>
<proteinExistence type="evidence at protein level"/>
<accession>Q5TX47</accession>
<keyword id="KW-0968">Cytoplasmic vesicle</keyword>
<keyword id="KW-0903">Direct protein sequencing</keyword>
<keyword id="KW-0472">Membrane</keyword>
<keyword id="KW-0532">Neurotransmitter transport</keyword>
<keyword id="KW-1185">Reference proteome</keyword>
<keyword id="KW-0770">Synapse</keyword>
<keyword id="KW-0812">Transmembrane</keyword>
<keyword id="KW-1133">Transmembrane helix</keyword>
<keyword id="KW-0813">Transport</keyword>
<name>STX1A_ANOGA</name>
<reference evidence="8" key="1">
    <citation type="journal article" date="2002" name="Science">
        <title>The genome sequence of the malaria mosquito Anopheles gambiae.</title>
        <authorList>
            <person name="Holt R.A."/>
            <person name="Subramanian G.M."/>
            <person name="Halpern A."/>
            <person name="Sutton G.G."/>
            <person name="Charlab R."/>
            <person name="Nusskern D.R."/>
            <person name="Wincker P."/>
            <person name="Clark A.G."/>
            <person name="Ribeiro J.M.C."/>
            <person name="Wides R."/>
            <person name="Salzberg S.L."/>
            <person name="Loftus B.J."/>
            <person name="Yandell M.D."/>
            <person name="Majoros W.H."/>
            <person name="Rusch D.B."/>
            <person name="Lai Z."/>
            <person name="Kraft C.L."/>
            <person name="Abril J.F."/>
            <person name="Anthouard V."/>
            <person name="Arensburger P."/>
            <person name="Atkinson P.W."/>
            <person name="Baden H."/>
            <person name="de Berardinis V."/>
            <person name="Baldwin D."/>
            <person name="Benes V."/>
            <person name="Biedler J."/>
            <person name="Blass C."/>
            <person name="Bolanos R."/>
            <person name="Boscus D."/>
            <person name="Barnstead M."/>
            <person name="Cai S."/>
            <person name="Center A."/>
            <person name="Chaturverdi K."/>
            <person name="Christophides G.K."/>
            <person name="Chrystal M.A.M."/>
            <person name="Clamp M."/>
            <person name="Cravchik A."/>
            <person name="Curwen V."/>
            <person name="Dana A."/>
            <person name="Delcher A."/>
            <person name="Dew I."/>
            <person name="Evans C.A."/>
            <person name="Flanigan M."/>
            <person name="Grundschober-Freimoser A."/>
            <person name="Friedli L."/>
            <person name="Gu Z."/>
            <person name="Guan P."/>
            <person name="Guigo R."/>
            <person name="Hillenmeyer M.E."/>
            <person name="Hladun S.L."/>
            <person name="Hogan J.R."/>
            <person name="Hong Y.S."/>
            <person name="Hoover J."/>
            <person name="Jaillon O."/>
            <person name="Ke Z."/>
            <person name="Kodira C.D."/>
            <person name="Kokoza E."/>
            <person name="Koutsos A."/>
            <person name="Letunic I."/>
            <person name="Levitsky A.A."/>
            <person name="Liang Y."/>
            <person name="Lin J.-J."/>
            <person name="Lobo N.F."/>
            <person name="Lopez J.R."/>
            <person name="Malek J.A."/>
            <person name="McIntosh T.C."/>
            <person name="Meister S."/>
            <person name="Miller J.R."/>
            <person name="Mobarry C."/>
            <person name="Mongin E."/>
            <person name="Murphy S.D."/>
            <person name="O'Brochta D.A."/>
            <person name="Pfannkoch C."/>
            <person name="Qi R."/>
            <person name="Regier M.A."/>
            <person name="Remington K."/>
            <person name="Shao H."/>
            <person name="Sharakhova M.V."/>
            <person name="Sitter C.D."/>
            <person name="Shetty J."/>
            <person name="Smith T.J."/>
            <person name="Strong R."/>
            <person name="Sun J."/>
            <person name="Thomasova D."/>
            <person name="Ton L.Q."/>
            <person name="Topalis P."/>
            <person name="Tu Z.J."/>
            <person name="Unger M.F."/>
            <person name="Walenz B."/>
            <person name="Wang A.H."/>
            <person name="Wang J."/>
            <person name="Wang M."/>
            <person name="Wang X."/>
            <person name="Woodford K.J."/>
            <person name="Wortman J.R."/>
            <person name="Wu M."/>
            <person name="Yao A."/>
            <person name="Zdobnov E.M."/>
            <person name="Zhang H."/>
            <person name="Zhao Q."/>
            <person name="Zhao S."/>
            <person name="Zhu S.C."/>
            <person name="Zhimulev I."/>
            <person name="Coluzzi M."/>
            <person name="della Torre A."/>
            <person name="Roth C.W."/>
            <person name="Louis C."/>
            <person name="Kalush F."/>
            <person name="Mural R.J."/>
            <person name="Myers E.W."/>
            <person name="Adams M.D."/>
            <person name="Smith H.O."/>
            <person name="Broder S."/>
            <person name="Gardner M.J."/>
            <person name="Fraser C.M."/>
            <person name="Birney E."/>
            <person name="Bork P."/>
            <person name="Brey P.T."/>
            <person name="Venter J.C."/>
            <person name="Weissenbach J."/>
            <person name="Kafatos F.C."/>
            <person name="Collins F.H."/>
            <person name="Hoffman S.L."/>
        </authorList>
    </citation>
    <scope>NUCLEOTIDE SEQUENCE [LARGE SCALE GENOMIC DNA]</scope>
    <source>
        <strain evidence="8">PEST</strain>
    </source>
</reference>
<reference evidence="8" key="2">
    <citation type="journal article" date="2007" name="Genome Biol.">
        <title>Update of the Anopheles gambiae PEST genome assembly.</title>
        <authorList>
            <person name="Sharakhova M.V."/>
            <person name="Hammond M.P."/>
            <person name="Lobo N.F."/>
            <person name="Krzywinski J."/>
            <person name="Unger M.F."/>
            <person name="Hillenmeyer M.E."/>
            <person name="Bruggner R.V."/>
            <person name="Birney E."/>
            <person name="Collins F.H."/>
        </authorList>
    </citation>
    <scope>NUCLEOTIDE SEQUENCE [LARGE SCALE GENOMIC DNA]</scope>
    <source>
        <strain evidence="8">PEST</strain>
    </source>
</reference>
<reference key="3">
    <citation type="journal article" date="2019" name="Nat. Commun.">
        <title>A neurotoxin that specifically targets Anopheles mosquitoes.</title>
        <authorList>
            <person name="Contreras E."/>
            <person name="Masuyer G."/>
            <person name="Qureshi N."/>
            <person name="Chawla S."/>
            <person name="Dhillon H.S."/>
            <person name="Lee H.L."/>
            <person name="Chen J."/>
            <person name="Stenmark P."/>
            <person name="Gill S.S."/>
        </authorList>
    </citation>
    <scope>PROTEIN SEQUENCE OF 241-255</scope>
    <scope>PROTEOLYTIC CLEAVAGE (MICROBIAL INFECTION) BY P.BIFERMENTANS PMP1</scope>
    <scope>MUTAGENESIS OF HIS-238; MET-243; 247-GLN-THR-248; 250-THR-GLN-251 AND LEU-257</scope>
</reference>
<gene>
    <name evidence="1 6" type="primary">Syx1A</name>
    <name evidence="8" type="ORF">AgaP_AGAP007698</name>
</gene>
<comment type="function">
    <text evidence="1">Plays a critical role in several secretory processes.</text>
</comment>
<comment type="subcellular location">
    <subcellularLocation>
        <location evidence="1">Cytoplasmic vesicle</location>
        <location evidence="1">Secretory vesicle</location>
        <location evidence="1">Synaptic vesicle membrane</location>
        <topology evidence="2">Single-pass type IV membrane protein</topology>
    </subcellularLocation>
</comment>
<comment type="PTM">
    <text evidence="5">(Microbial infection) Targeted and hydrolyzed by the light chain (LC) of P.bifermentans PMP1. Cleavage probably inhibits neurotransmitter release.</text>
</comment>
<comment type="similarity">
    <text evidence="7">Belongs to the syntaxin family.</text>
</comment>
<feature type="chain" id="PRO_0000457882" description="Syntaxin-1A">
    <location>
        <begin position="1"/>
        <end position="290"/>
    </location>
</feature>
<feature type="topological domain" description="Cytoplasmic" evidence="2">
    <location>
        <begin position="1"/>
        <end position="267"/>
    </location>
</feature>
<feature type="transmembrane region" description="Helical; Anchor for type IV membrane protein" evidence="2">
    <location>
        <begin position="268"/>
        <end position="289"/>
    </location>
</feature>
<feature type="topological domain" description="Vesicular" evidence="2">
    <location>
        <position position="290"/>
    </location>
</feature>
<feature type="domain" description="t-SNARE coiled-coil homology" evidence="3">
    <location>
        <begin position="194"/>
        <end position="256"/>
    </location>
</feature>
<feature type="region of interest" description="Disordered" evidence="4">
    <location>
        <begin position="1"/>
        <end position="21"/>
    </location>
</feature>
<feature type="site" description="(Microbial infection) Cleavage; by P.bifermentans PMP1 light chain (LC)" evidence="5">
    <location>
        <begin position="240"/>
        <end position="241"/>
    </location>
</feature>
<feature type="mutagenesis site" description="Very poorly cleaved in vitro by PMP1 LC." evidence="5">
    <original>H</original>
    <variation>N</variation>
    <location>
        <position position="238"/>
    </location>
</feature>
<feature type="mutagenesis site" description="Very poorly cleaved in vitro by PMP1 LC." evidence="5">
    <original>M</original>
    <variation>V</variation>
    <location>
        <position position="243"/>
    </location>
</feature>
<feature type="mutagenesis site" description="Very poorly cleaved in vitro by PMP1 LC." evidence="5">
    <original>QT</original>
    <variation>ER</variation>
    <location>
        <begin position="247"/>
        <end position="248"/>
    </location>
</feature>
<feature type="mutagenesis site" description="Very poorly cleaved in vitro by PMP1 LC." evidence="5">
    <original>TQ</original>
    <variation>VS</variation>
    <location>
        <begin position="250"/>
        <end position="251"/>
    </location>
</feature>
<feature type="mutagenesis site" description="No longer cleaved in vitro by PMP1 LC." evidence="5">
    <original>L</original>
    <variation>V</variation>
    <location>
        <position position="257"/>
    </location>
</feature>
<dbReference type="EMBL" id="AAAB01008807">
    <property type="protein sequence ID" value="EAL41719.2"/>
    <property type="molecule type" value="Genomic_DNA"/>
</dbReference>
<dbReference type="EMBL" id="AAAB01008807">
    <property type="protein sequence ID" value="EDO64509.1"/>
    <property type="molecule type" value="Genomic_DNA"/>
</dbReference>
<dbReference type="RefSeq" id="XP_001687860.1">
    <property type="nucleotide sequence ID" value="XM_001687808.1"/>
</dbReference>
<dbReference type="SMR" id="Q5TX47"/>
<dbReference type="FunCoup" id="Q5TX47">
    <property type="interactions" value="381"/>
</dbReference>
<dbReference type="STRING" id="7165.Q5TX47"/>
<dbReference type="PaxDb" id="7165-AGAP007698-PB"/>
<dbReference type="EnsemblMetazoa" id="AGAP007698-RB">
    <property type="protein sequence ID" value="AGAP007698-PB"/>
    <property type="gene ID" value="AGAP007698"/>
</dbReference>
<dbReference type="EnsemblMetazoa" id="AGAP007698-RC">
    <property type="protein sequence ID" value="AGAP007698-PC"/>
    <property type="gene ID" value="AGAP007698"/>
</dbReference>
<dbReference type="GeneID" id="1269535"/>
<dbReference type="KEGG" id="aga:1269535"/>
<dbReference type="VEuPathDB" id="VectorBase:AGAMI1_014504"/>
<dbReference type="VEuPathDB" id="VectorBase:AGAP007698"/>
<dbReference type="eggNOG" id="KOG0810">
    <property type="taxonomic scope" value="Eukaryota"/>
</dbReference>
<dbReference type="HOGENOM" id="CLU_042423_2_2_1"/>
<dbReference type="InParanoid" id="Q5TX47"/>
<dbReference type="Proteomes" id="UP000007062">
    <property type="component" value="Chromosome 2L"/>
</dbReference>
<dbReference type="GO" id="GO:0012505">
    <property type="term" value="C:endomembrane system"/>
    <property type="evidence" value="ECO:0000318"/>
    <property type="project" value="GO_Central"/>
</dbReference>
<dbReference type="GO" id="GO:0005886">
    <property type="term" value="C:plasma membrane"/>
    <property type="evidence" value="ECO:0000318"/>
    <property type="project" value="GO_Central"/>
</dbReference>
<dbReference type="GO" id="GO:0031201">
    <property type="term" value="C:SNARE complex"/>
    <property type="evidence" value="ECO:0000318"/>
    <property type="project" value="GO_Central"/>
</dbReference>
<dbReference type="GO" id="GO:0030672">
    <property type="term" value="C:synaptic vesicle membrane"/>
    <property type="evidence" value="ECO:0007669"/>
    <property type="project" value="UniProtKB-SubCell"/>
</dbReference>
<dbReference type="GO" id="GO:0005484">
    <property type="term" value="F:SNAP receptor activity"/>
    <property type="evidence" value="ECO:0000318"/>
    <property type="project" value="GO_Central"/>
</dbReference>
<dbReference type="GO" id="GO:0000149">
    <property type="term" value="F:SNARE binding"/>
    <property type="evidence" value="ECO:0000318"/>
    <property type="project" value="GO_Central"/>
</dbReference>
<dbReference type="GO" id="GO:0006887">
    <property type="term" value="P:exocytosis"/>
    <property type="evidence" value="ECO:0000318"/>
    <property type="project" value="GO_Central"/>
</dbReference>
<dbReference type="GO" id="GO:0006886">
    <property type="term" value="P:intracellular protein transport"/>
    <property type="evidence" value="ECO:0000318"/>
    <property type="project" value="GO_Central"/>
</dbReference>
<dbReference type="GO" id="GO:0006836">
    <property type="term" value="P:neurotransmitter transport"/>
    <property type="evidence" value="ECO:0007669"/>
    <property type="project" value="UniProtKB-KW"/>
</dbReference>
<dbReference type="GO" id="GO:0048278">
    <property type="term" value="P:vesicle docking"/>
    <property type="evidence" value="ECO:0000318"/>
    <property type="project" value="GO_Central"/>
</dbReference>
<dbReference type="GO" id="GO:0006906">
    <property type="term" value="P:vesicle fusion"/>
    <property type="evidence" value="ECO:0000318"/>
    <property type="project" value="GO_Central"/>
</dbReference>
<dbReference type="CDD" id="cd15880">
    <property type="entry name" value="SNARE_syntaxin1"/>
    <property type="match status" value="1"/>
</dbReference>
<dbReference type="CDD" id="cd00179">
    <property type="entry name" value="SynN"/>
    <property type="match status" value="1"/>
</dbReference>
<dbReference type="FunFam" id="1.20.5.110:FF:000068">
    <property type="entry name" value="Syntaxin 1A"/>
    <property type="match status" value="1"/>
</dbReference>
<dbReference type="FunFam" id="1.20.58.70:FF:000001">
    <property type="entry name" value="Syntaxin 3"/>
    <property type="match status" value="1"/>
</dbReference>
<dbReference type="Gene3D" id="1.20.5.110">
    <property type="match status" value="1"/>
</dbReference>
<dbReference type="Gene3D" id="1.20.58.70">
    <property type="match status" value="1"/>
</dbReference>
<dbReference type="InterPro" id="IPR010989">
    <property type="entry name" value="SNARE"/>
</dbReference>
<dbReference type="InterPro" id="IPR045242">
    <property type="entry name" value="Syntaxin"/>
</dbReference>
<dbReference type="InterPro" id="IPR006012">
    <property type="entry name" value="Syntaxin/epimorphin_CS"/>
</dbReference>
<dbReference type="InterPro" id="IPR006011">
    <property type="entry name" value="Syntaxin_N"/>
</dbReference>
<dbReference type="InterPro" id="IPR000727">
    <property type="entry name" value="T_SNARE_dom"/>
</dbReference>
<dbReference type="PANTHER" id="PTHR19957">
    <property type="entry name" value="SYNTAXIN"/>
    <property type="match status" value="1"/>
</dbReference>
<dbReference type="PANTHER" id="PTHR19957:SF424">
    <property type="entry name" value="SYNTAXIN-1A"/>
    <property type="match status" value="1"/>
</dbReference>
<dbReference type="Pfam" id="PF05739">
    <property type="entry name" value="SNARE"/>
    <property type="match status" value="1"/>
</dbReference>
<dbReference type="Pfam" id="PF00804">
    <property type="entry name" value="Syntaxin"/>
    <property type="match status" value="1"/>
</dbReference>
<dbReference type="SMART" id="SM00503">
    <property type="entry name" value="SynN"/>
    <property type="match status" value="1"/>
</dbReference>
<dbReference type="SMART" id="SM00397">
    <property type="entry name" value="t_SNARE"/>
    <property type="match status" value="1"/>
</dbReference>
<dbReference type="SUPFAM" id="SSF47661">
    <property type="entry name" value="t-snare proteins"/>
    <property type="match status" value="1"/>
</dbReference>
<dbReference type="PROSITE" id="PS00914">
    <property type="entry name" value="SYNTAXIN"/>
    <property type="match status" value="1"/>
</dbReference>
<dbReference type="PROSITE" id="PS50192">
    <property type="entry name" value="T_SNARE"/>
    <property type="match status" value="1"/>
</dbReference>
<evidence type="ECO:0000250" key="1">
    <source>
        <dbReference type="UniProtKB" id="Q24547"/>
    </source>
</evidence>
<evidence type="ECO:0000255" key="2"/>
<evidence type="ECO:0000255" key="3">
    <source>
        <dbReference type="PROSITE-ProRule" id="PRU00202"/>
    </source>
</evidence>
<evidence type="ECO:0000256" key="4">
    <source>
        <dbReference type="SAM" id="MobiDB-lite"/>
    </source>
</evidence>
<evidence type="ECO:0000269" key="5">
    <source>
    </source>
</evidence>
<evidence type="ECO:0000303" key="6">
    <source>
    </source>
</evidence>
<evidence type="ECO:0000305" key="7"/>
<evidence type="ECO:0000312" key="8">
    <source>
        <dbReference type="EMBL" id="EAL41719.2"/>
    </source>
</evidence>